<proteinExistence type="inferred from homology"/>
<comment type="function">
    <text evidence="1">Catalyzes the thiamine diphosphate-dependent decarboxylation of 2-oxoglutarate and the subsequent addition of the resulting succinic semialdehyde-thiamine pyrophosphate anion to isochorismate to yield 2-succinyl-5-enolpyruvyl-6-hydroxy-3-cyclohexene-1-carboxylate (SEPHCHC).</text>
</comment>
<comment type="catalytic activity">
    <reaction evidence="1">
        <text>isochorismate + 2-oxoglutarate + H(+) = 5-enolpyruvoyl-6-hydroxy-2-succinyl-cyclohex-3-ene-1-carboxylate + CO2</text>
        <dbReference type="Rhea" id="RHEA:25593"/>
        <dbReference type="ChEBI" id="CHEBI:15378"/>
        <dbReference type="ChEBI" id="CHEBI:16526"/>
        <dbReference type="ChEBI" id="CHEBI:16810"/>
        <dbReference type="ChEBI" id="CHEBI:29780"/>
        <dbReference type="ChEBI" id="CHEBI:58818"/>
        <dbReference type="EC" id="2.2.1.9"/>
    </reaction>
</comment>
<comment type="cofactor">
    <cofactor evidence="1">
        <name>Mg(2+)</name>
        <dbReference type="ChEBI" id="CHEBI:18420"/>
    </cofactor>
    <cofactor evidence="1">
        <name>Mn(2+)</name>
        <dbReference type="ChEBI" id="CHEBI:29035"/>
    </cofactor>
</comment>
<comment type="cofactor">
    <cofactor evidence="1">
        <name>thiamine diphosphate</name>
        <dbReference type="ChEBI" id="CHEBI:58937"/>
    </cofactor>
    <text evidence="1">Binds 1 thiamine pyrophosphate per subunit.</text>
</comment>
<comment type="pathway">
    <text evidence="1">Quinol/quinone metabolism; 1,4-dihydroxy-2-naphthoate biosynthesis; 1,4-dihydroxy-2-naphthoate from chorismate: step 2/7.</text>
</comment>
<comment type="pathway">
    <text evidence="1">Quinol/quinone metabolism; menaquinone biosynthesis.</text>
</comment>
<comment type="subunit">
    <text evidence="1">Homodimer.</text>
</comment>
<comment type="similarity">
    <text evidence="1">Belongs to the TPP enzyme family. MenD subfamily.</text>
</comment>
<gene>
    <name evidence="1" type="primary">menD</name>
    <name type="ordered locus">Sama_3460</name>
</gene>
<sequence>MDHLHSSTAELNLLWGSLILEELTRHGVMHLCMAPGSRSTPLTLAAAAQDKLTRHLHFDERGLGFLALGLAKASQAPVAIITTSGTAVANLYPAIVEASLTHVPLIILSGDRPWELIGCGANQAIEQLGIFGGYARQLNLPTPDLRIGPEVLLSALDEQLANLDRPLHINCMYPEPLYPSEHRFDQFDSYLSRLGQWQDTQVPYLSVANASLSAFPPRDAMMRFVHGKGVIVAGTLTEAETPTELITLSQKLGWPLLTDAQSQLRQHPGAIGHIDQLLLNPRARALLDQAERVLVFGGRLLSKRLISYLAEKDWHSYWQVLPHQERLDPSHSNKQLWLGRAGDVCALEWPRSSEANWAASLISLNQSVEQDFIHHIDGGEFGEAQVIRAIAASHTAEQQLFIGNSLPVRLYDMFAPIGCCAASTYTNRGASGIDGLIATACGVARHSGRPTTLILGDLSALHDLNSLALARDCQSPLVIVVLNNDGGNIFNLLPVPTEELRSDFYRLSHGLEFGYGAAMFGLPYDRAEDMEAFIDAYQAALEHPGASVIEVTVAQDQASNQIRRMAEWIRSR</sequence>
<keyword id="KW-0460">Magnesium</keyword>
<keyword id="KW-0464">Manganese</keyword>
<keyword id="KW-0474">Menaquinone biosynthesis</keyword>
<keyword id="KW-0479">Metal-binding</keyword>
<keyword id="KW-1185">Reference proteome</keyword>
<keyword id="KW-0786">Thiamine pyrophosphate</keyword>
<keyword id="KW-0808">Transferase</keyword>
<organism>
    <name type="scientific">Shewanella amazonensis (strain ATCC BAA-1098 / SB2B)</name>
    <dbReference type="NCBI Taxonomy" id="326297"/>
    <lineage>
        <taxon>Bacteria</taxon>
        <taxon>Pseudomonadati</taxon>
        <taxon>Pseudomonadota</taxon>
        <taxon>Gammaproteobacteria</taxon>
        <taxon>Alteromonadales</taxon>
        <taxon>Shewanellaceae</taxon>
        <taxon>Shewanella</taxon>
    </lineage>
</organism>
<evidence type="ECO:0000255" key="1">
    <source>
        <dbReference type="HAMAP-Rule" id="MF_01659"/>
    </source>
</evidence>
<feature type="chain" id="PRO_0000341827" description="2-succinyl-5-enolpyruvyl-6-hydroxy-3-cyclohexene-1-carboxylate synthase">
    <location>
        <begin position="1"/>
        <end position="572"/>
    </location>
</feature>
<protein>
    <recommendedName>
        <fullName evidence="1">2-succinyl-5-enolpyruvyl-6-hydroxy-3-cyclohexene-1-carboxylate synthase</fullName>
        <shortName evidence="1">SEPHCHC synthase</shortName>
        <ecNumber evidence="1">2.2.1.9</ecNumber>
    </recommendedName>
    <alternativeName>
        <fullName evidence="1">Menaquinone biosynthesis protein MenD</fullName>
    </alternativeName>
</protein>
<name>MEND_SHEAM</name>
<dbReference type="EC" id="2.2.1.9" evidence="1"/>
<dbReference type="EMBL" id="CP000507">
    <property type="protein sequence ID" value="ABM01663.1"/>
    <property type="molecule type" value="Genomic_DNA"/>
</dbReference>
<dbReference type="RefSeq" id="WP_011761567.1">
    <property type="nucleotide sequence ID" value="NC_008700.1"/>
</dbReference>
<dbReference type="SMR" id="A1SBA6"/>
<dbReference type="STRING" id="326297.Sama_3460"/>
<dbReference type="KEGG" id="saz:Sama_3460"/>
<dbReference type="eggNOG" id="COG1165">
    <property type="taxonomic scope" value="Bacteria"/>
</dbReference>
<dbReference type="HOGENOM" id="CLU_006051_3_0_6"/>
<dbReference type="OrthoDB" id="9791859at2"/>
<dbReference type="UniPathway" id="UPA00079"/>
<dbReference type="UniPathway" id="UPA01057">
    <property type="reaction ID" value="UER00164"/>
</dbReference>
<dbReference type="Proteomes" id="UP000009175">
    <property type="component" value="Chromosome"/>
</dbReference>
<dbReference type="GO" id="GO:0070204">
    <property type="term" value="F:2-succinyl-5-enolpyruvyl-6-hydroxy-3-cyclohexene-1-carboxylic-acid synthase activity"/>
    <property type="evidence" value="ECO:0007669"/>
    <property type="project" value="UniProtKB-UniRule"/>
</dbReference>
<dbReference type="GO" id="GO:0000287">
    <property type="term" value="F:magnesium ion binding"/>
    <property type="evidence" value="ECO:0007669"/>
    <property type="project" value="UniProtKB-UniRule"/>
</dbReference>
<dbReference type="GO" id="GO:0030145">
    <property type="term" value="F:manganese ion binding"/>
    <property type="evidence" value="ECO:0007669"/>
    <property type="project" value="UniProtKB-UniRule"/>
</dbReference>
<dbReference type="GO" id="GO:0030976">
    <property type="term" value="F:thiamine pyrophosphate binding"/>
    <property type="evidence" value="ECO:0007669"/>
    <property type="project" value="UniProtKB-UniRule"/>
</dbReference>
<dbReference type="GO" id="GO:0009234">
    <property type="term" value="P:menaquinone biosynthetic process"/>
    <property type="evidence" value="ECO:0007669"/>
    <property type="project" value="UniProtKB-UniRule"/>
</dbReference>
<dbReference type="CDD" id="cd07037">
    <property type="entry name" value="TPP_PYR_MenD"/>
    <property type="match status" value="1"/>
</dbReference>
<dbReference type="CDD" id="cd02009">
    <property type="entry name" value="TPP_SHCHC_synthase"/>
    <property type="match status" value="1"/>
</dbReference>
<dbReference type="Gene3D" id="3.40.50.970">
    <property type="match status" value="2"/>
</dbReference>
<dbReference type="Gene3D" id="3.40.50.1220">
    <property type="entry name" value="TPP-binding domain"/>
    <property type="match status" value="1"/>
</dbReference>
<dbReference type="HAMAP" id="MF_01659">
    <property type="entry name" value="MenD"/>
    <property type="match status" value="1"/>
</dbReference>
<dbReference type="InterPro" id="IPR004433">
    <property type="entry name" value="MenaQ_synth_MenD"/>
</dbReference>
<dbReference type="InterPro" id="IPR032264">
    <property type="entry name" value="MenD_middle"/>
</dbReference>
<dbReference type="InterPro" id="IPR029061">
    <property type="entry name" value="THDP-binding"/>
</dbReference>
<dbReference type="InterPro" id="IPR012001">
    <property type="entry name" value="Thiamin_PyroP_enz_TPP-bd_dom"/>
</dbReference>
<dbReference type="InterPro" id="IPR011766">
    <property type="entry name" value="TPP_enzyme_TPP-bd"/>
</dbReference>
<dbReference type="NCBIfam" id="TIGR00173">
    <property type="entry name" value="menD"/>
    <property type="match status" value="1"/>
</dbReference>
<dbReference type="PANTHER" id="PTHR42916">
    <property type="entry name" value="2-SUCCINYL-5-ENOLPYRUVYL-6-HYDROXY-3-CYCLOHEXENE-1-CARBOXYLATE SYNTHASE"/>
    <property type="match status" value="1"/>
</dbReference>
<dbReference type="PANTHER" id="PTHR42916:SF1">
    <property type="entry name" value="PROTEIN PHYLLO, CHLOROPLASTIC"/>
    <property type="match status" value="1"/>
</dbReference>
<dbReference type="Pfam" id="PF02775">
    <property type="entry name" value="TPP_enzyme_C"/>
    <property type="match status" value="1"/>
</dbReference>
<dbReference type="Pfam" id="PF16582">
    <property type="entry name" value="TPP_enzyme_M_2"/>
    <property type="match status" value="1"/>
</dbReference>
<dbReference type="Pfam" id="PF02776">
    <property type="entry name" value="TPP_enzyme_N"/>
    <property type="match status" value="1"/>
</dbReference>
<dbReference type="PIRSF" id="PIRSF004983">
    <property type="entry name" value="MenD"/>
    <property type="match status" value="1"/>
</dbReference>
<dbReference type="SUPFAM" id="SSF52518">
    <property type="entry name" value="Thiamin diphosphate-binding fold (THDP-binding)"/>
    <property type="match status" value="2"/>
</dbReference>
<reference key="1">
    <citation type="submission" date="2006-12" db="EMBL/GenBank/DDBJ databases">
        <title>Complete sequence of Shewanella amazonensis SB2B.</title>
        <authorList>
            <consortium name="US DOE Joint Genome Institute"/>
            <person name="Copeland A."/>
            <person name="Lucas S."/>
            <person name="Lapidus A."/>
            <person name="Barry K."/>
            <person name="Detter J.C."/>
            <person name="Glavina del Rio T."/>
            <person name="Hammon N."/>
            <person name="Israni S."/>
            <person name="Dalin E."/>
            <person name="Tice H."/>
            <person name="Pitluck S."/>
            <person name="Munk A.C."/>
            <person name="Brettin T."/>
            <person name="Bruce D."/>
            <person name="Han C."/>
            <person name="Tapia R."/>
            <person name="Gilna P."/>
            <person name="Schmutz J."/>
            <person name="Larimer F."/>
            <person name="Land M."/>
            <person name="Hauser L."/>
            <person name="Kyrpides N."/>
            <person name="Mikhailova N."/>
            <person name="Fredrickson J."/>
            <person name="Richardson P."/>
        </authorList>
    </citation>
    <scope>NUCLEOTIDE SEQUENCE [LARGE SCALE GENOMIC DNA]</scope>
    <source>
        <strain>ATCC BAA-1098 / SB2B</strain>
    </source>
</reference>
<accession>A1SBA6</accession>